<sequence length="275" mass="30101">MAIVKVKPTSPGRRAMVKVVNKNLHQGKPFAALLDSQSSTAGRNNNGRITTRHKGGGHKQHYRIVDFRRTKDGIPAKVERLEYDPNRSANIALVLYADGERRYIIAPKGLTVGQQLMSGSEAPIRAGNTLPIRNIPVGTTIHCIEMLPGKGAQMARSAGTSAMLLAREGVYAQVRLRSGEIRRVHIECRATIGEVGNEEHSLRQIGKAGANRWRGIRPTVRGVAMNPVDHPHGGGEGKTAAGRDPVSPWGTPAKGYRTRSNKRTTTMIVQRRHKR</sequence>
<accession>B1JU25</accession>
<reference key="1">
    <citation type="submission" date="2008-02" db="EMBL/GenBank/DDBJ databases">
        <title>Complete sequence of chromosome 1 of Burkholderia cenocepacia MC0-3.</title>
        <authorList>
            <person name="Copeland A."/>
            <person name="Lucas S."/>
            <person name="Lapidus A."/>
            <person name="Barry K."/>
            <person name="Bruce D."/>
            <person name="Goodwin L."/>
            <person name="Glavina del Rio T."/>
            <person name="Dalin E."/>
            <person name="Tice H."/>
            <person name="Pitluck S."/>
            <person name="Chain P."/>
            <person name="Malfatti S."/>
            <person name="Shin M."/>
            <person name="Vergez L."/>
            <person name="Schmutz J."/>
            <person name="Larimer F."/>
            <person name="Land M."/>
            <person name="Hauser L."/>
            <person name="Kyrpides N."/>
            <person name="Mikhailova N."/>
            <person name="Tiedje J."/>
            <person name="Richardson P."/>
        </authorList>
    </citation>
    <scope>NUCLEOTIDE SEQUENCE [LARGE SCALE GENOMIC DNA]</scope>
    <source>
        <strain>MC0-3</strain>
    </source>
</reference>
<keyword id="KW-0687">Ribonucleoprotein</keyword>
<keyword id="KW-0689">Ribosomal protein</keyword>
<keyword id="KW-0694">RNA-binding</keyword>
<keyword id="KW-0699">rRNA-binding</keyword>
<dbReference type="EMBL" id="CP000958">
    <property type="protein sequence ID" value="ACA89510.1"/>
    <property type="molecule type" value="Genomic_DNA"/>
</dbReference>
<dbReference type="RefSeq" id="WP_006482900.1">
    <property type="nucleotide sequence ID" value="NC_010508.1"/>
</dbReference>
<dbReference type="SMR" id="B1JU25"/>
<dbReference type="GeneID" id="93193448"/>
<dbReference type="KEGG" id="bcm:Bcenmc03_0330"/>
<dbReference type="HOGENOM" id="CLU_036235_2_1_4"/>
<dbReference type="Proteomes" id="UP000002169">
    <property type="component" value="Chromosome 1"/>
</dbReference>
<dbReference type="GO" id="GO:0015934">
    <property type="term" value="C:large ribosomal subunit"/>
    <property type="evidence" value="ECO:0007669"/>
    <property type="project" value="InterPro"/>
</dbReference>
<dbReference type="GO" id="GO:0019843">
    <property type="term" value="F:rRNA binding"/>
    <property type="evidence" value="ECO:0007669"/>
    <property type="project" value="UniProtKB-UniRule"/>
</dbReference>
<dbReference type="GO" id="GO:0003735">
    <property type="term" value="F:structural constituent of ribosome"/>
    <property type="evidence" value="ECO:0007669"/>
    <property type="project" value="InterPro"/>
</dbReference>
<dbReference type="GO" id="GO:0016740">
    <property type="term" value="F:transferase activity"/>
    <property type="evidence" value="ECO:0007669"/>
    <property type="project" value="InterPro"/>
</dbReference>
<dbReference type="GO" id="GO:0002181">
    <property type="term" value="P:cytoplasmic translation"/>
    <property type="evidence" value="ECO:0007669"/>
    <property type="project" value="TreeGrafter"/>
</dbReference>
<dbReference type="FunFam" id="2.30.30.30:FF:000001">
    <property type="entry name" value="50S ribosomal protein L2"/>
    <property type="match status" value="1"/>
</dbReference>
<dbReference type="FunFam" id="2.40.50.140:FF:000003">
    <property type="entry name" value="50S ribosomal protein L2"/>
    <property type="match status" value="1"/>
</dbReference>
<dbReference type="FunFam" id="4.10.950.10:FF:000001">
    <property type="entry name" value="50S ribosomal protein L2"/>
    <property type="match status" value="1"/>
</dbReference>
<dbReference type="Gene3D" id="2.30.30.30">
    <property type="match status" value="1"/>
</dbReference>
<dbReference type="Gene3D" id="2.40.50.140">
    <property type="entry name" value="Nucleic acid-binding proteins"/>
    <property type="match status" value="1"/>
</dbReference>
<dbReference type="Gene3D" id="4.10.950.10">
    <property type="entry name" value="Ribosomal protein L2, domain 3"/>
    <property type="match status" value="1"/>
</dbReference>
<dbReference type="HAMAP" id="MF_01320_B">
    <property type="entry name" value="Ribosomal_uL2_B"/>
    <property type="match status" value="1"/>
</dbReference>
<dbReference type="InterPro" id="IPR012340">
    <property type="entry name" value="NA-bd_OB-fold"/>
</dbReference>
<dbReference type="InterPro" id="IPR014722">
    <property type="entry name" value="Rib_uL2_dom2"/>
</dbReference>
<dbReference type="InterPro" id="IPR002171">
    <property type="entry name" value="Ribosomal_uL2"/>
</dbReference>
<dbReference type="InterPro" id="IPR005880">
    <property type="entry name" value="Ribosomal_uL2_bac/org-type"/>
</dbReference>
<dbReference type="InterPro" id="IPR022669">
    <property type="entry name" value="Ribosomal_uL2_C"/>
</dbReference>
<dbReference type="InterPro" id="IPR022671">
    <property type="entry name" value="Ribosomal_uL2_CS"/>
</dbReference>
<dbReference type="InterPro" id="IPR014726">
    <property type="entry name" value="Ribosomal_uL2_dom3"/>
</dbReference>
<dbReference type="InterPro" id="IPR022666">
    <property type="entry name" value="Ribosomal_uL2_RNA-bd_dom"/>
</dbReference>
<dbReference type="InterPro" id="IPR008991">
    <property type="entry name" value="Translation_prot_SH3-like_sf"/>
</dbReference>
<dbReference type="NCBIfam" id="TIGR01171">
    <property type="entry name" value="rplB_bact"/>
    <property type="match status" value="1"/>
</dbReference>
<dbReference type="PANTHER" id="PTHR13691:SF5">
    <property type="entry name" value="LARGE RIBOSOMAL SUBUNIT PROTEIN UL2M"/>
    <property type="match status" value="1"/>
</dbReference>
<dbReference type="PANTHER" id="PTHR13691">
    <property type="entry name" value="RIBOSOMAL PROTEIN L2"/>
    <property type="match status" value="1"/>
</dbReference>
<dbReference type="Pfam" id="PF00181">
    <property type="entry name" value="Ribosomal_L2"/>
    <property type="match status" value="1"/>
</dbReference>
<dbReference type="Pfam" id="PF03947">
    <property type="entry name" value="Ribosomal_L2_C"/>
    <property type="match status" value="1"/>
</dbReference>
<dbReference type="PIRSF" id="PIRSF002158">
    <property type="entry name" value="Ribosomal_L2"/>
    <property type="match status" value="1"/>
</dbReference>
<dbReference type="SMART" id="SM01383">
    <property type="entry name" value="Ribosomal_L2"/>
    <property type="match status" value="1"/>
</dbReference>
<dbReference type="SMART" id="SM01382">
    <property type="entry name" value="Ribosomal_L2_C"/>
    <property type="match status" value="1"/>
</dbReference>
<dbReference type="SUPFAM" id="SSF50249">
    <property type="entry name" value="Nucleic acid-binding proteins"/>
    <property type="match status" value="1"/>
</dbReference>
<dbReference type="SUPFAM" id="SSF50104">
    <property type="entry name" value="Translation proteins SH3-like domain"/>
    <property type="match status" value="1"/>
</dbReference>
<dbReference type="PROSITE" id="PS00467">
    <property type="entry name" value="RIBOSOMAL_L2"/>
    <property type="match status" value="1"/>
</dbReference>
<name>RL2_BURO0</name>
<proteinExistence type="inferred from homology"/>
<feature type="chain" id="PRO_1000141516" description="Large ribosomal subunit protein uL2">
    <location>
        <begin position="1"/>
        <end position="275"/>
    </location>
</feature>
<feature type="region of interest" description="Disordered" evidence="2">
    <location>
        <begin position="35"/>
        <end position="59"/>
    </location>
</feature>
<feature type="region of interest" description="Disordered" evidence="2">
    <location>
        <begin position="224"/>
        <end position="275"/>
    </location>
</feature>
<feature type="compositionally biased region" description="Polar residues" evidence="2">
    <location>
        <begin position="35"/>
        <end position="49"/>
    </location>
</feature>
<feature type="compositionally biased region" description="Basic residues" evidence="2">
    <location>
        <begin position="50"/>
        <end position="59"/>
    </location>
</feature>
<protein>
    <recommendedName>
        <fullName evidence="1">Large ribosomal subunit protein uL2</fullName>
    </recommendedName>
    <alternativeName>
        <fullName evidence="3">50S ribosomal protein L2</fullName>
    </alternativeName>
</protein>
<comment type="function">
    <text evidence="1">One of the primary rRNA binding proteins. Required for association of the 30S and 50S subunits to form the 70S ribosome, for tRNA binding and peptide bond formation. It has been suggested to have peptidyltransferase activity; this is somewhat controversial. Makes several contacts with the 16S rRNA in the 70S ribosome.</text>
</comment>
<comment type="subunit">
    <text evidence="1">Part of the 50S ribosomal subunit. Forms a bridge to the 30S subunit in the 70S ribosome.</text>
</comment>
<comment type="similarity">
    <text evidence="1">Belongs to the universal ribosomal protein uL2 family.</text>
</comment>
<gene>
    <name evidence="1" type="primary">rplB</name>
    <name type="ordered locus">Bcenmc03_0330</name>
</gene>
<evidence type="ECO:0000255" key="1">
    <source>
        <dbReference type="HAMAP-Rule" id="MF_01320"/>
    </source>
</evidence>
<evidence type="ECO:0000256" key="2">
    <source>
        <dbReference type="SAM" id="MobiDB-lite"/>
    </source>
</evidence>
<evidence type="ECO:0000305" key="3"/>
<organism>
    <name type="scientific">Burkholderia orbicola (strain MC0-3)</name>
    <dbReference type="NCBI Taxonomy" id="406425"/>
    <lineage>
        <taxon>Bacteria</taxon>
        <taxon>Pseudomonadati</taxon>
        <taxon>Pseudomonadota</taxon>
        <taxon>Betaproteobacteria</taxon>
        <taxon>Burkholderiales</taxon>
        <taxon>Burkholderiaceae</taxon>
        <taxon>Burkholderia</taxon>
        <taxon>Burkholderia cepacia complex</taxon>
        <taxon>Burkholderia orbicola</taxon>
    </lineage>
</organism>